<dbReference type="EMBL" id="AB621549">
    <property type="protein sequence ID" value="BAK39578.1"/>
    <property type="molecule type" value="mRNA"/>
</dbReference>
<dbReference type="SMR" id="F7J220"/>
<dbReference type="GlyCosmos" id="F7J220">
    <property type="glycosylation" value="13 sites, No reported glycans"/>
</dbReference>
<dbReference type="GO" id="GO:0030659">
    <property type="term" value="C:cytoplasmic vesicle membrane"/>
    <property type="evidence" value="ECO:0007669"/>
    <property type="project" value="UniProtKB-SubCell"/>
</dbReference>
<dbReference type="GO" id="GO:0045087">
    <property type="term" value="P:innate immune response"/>
    <property type="evidence" value="ECO:0007669"/>
    <property type="project" value="UniProtKB-KW"/>
</dbReference>
<dbReference type="GO" id="GO:0006909">
    <property type="term" value="P:phagocytosis"/>
    <property type="evidence" value="ECO:0007669"/>
    <property type="project" value="UniProtKB-KW"/>
</dbReference>
<dbReference type="CDD" id="cd00033">
    <property type="entry name" value="CCP"/>
    <property type="match status" value="1"/>
</dbReference>
<dbReference type="FunFam" id="3.10.250.10:FF:000001">
    <property type="entry name" value="Lysyl oxidase 4 isoform X1"/>
    <property type="match status" value="2"/>
</dbReference>
<dbReference type="FunFam" id="3.10.250.10:FF:000006">
    <property type="entry name" value="neurotrypsin isoform X2"/>
    <property type="match status" value="2"/>
</dbReference>
<dbReference type="FunFam" id="3.10.250.10:FF:000011">
    <property type="entry name" value="Scavenger receptor class A member 5"/>
    <property type="match status" value="2"/>
</dbReference>
<dbReference type="FunFam" id="3.10.250.10:FF:000016">
    <property type="entry name" value="Scavenger receptor cysteine-rich protein type 12"/>
    <property type="match status" value="3"/>
</dbReference>
<dbReference type="Gene3D" id="2.10.70.10">
    <property type="entry name" value="Complement Module, domain 1"/>
    <property type="match status" value="1"/>
</dbReference>
<dbReference type="Gene3D" id="3.10.250.10">
    <property type="entry name" value="SRCR-like domain"/>
    <property type="match status" value="9"/>
</dbReference>
<dbReference type="InterPro" id="IPR001190">
    <property type="entry name" value="SRCR"/>
</dbReference>
<dbReference type="InterPro" id="IPR036772">
    <property type="entry name" value="SRCR-like_dom_sf"/>
</dbReference>
<dbReference type="InterPro" id="IPR035976">
    <property type="entry name" value="Sushi/SCR/CCP_sf"/>
</dbReference>
<dbReference type="InterPro" id="IPR000436">
    <property type="entry name" value="Sushi_SCR_CCP_dom"/>
</dbReference>
<dbReference type="PANTHER" id="PTHR19331:SF465">
    <property type="entry name" value="EGG PEPTIDE SPERACT RECEPTOR"/>
    <property type="match status" value="1"/>
</dbReference>
<dbReference type="PANTHER" id="PTHR19331">
    <property type="entry name" value="SCAVENGER RECEPTOR DOMAIN-CONTAINING"/>
    <property type="match status" value="1"/>
</dbReference>
<dbReference type="Pfam" id="PF00530">
    <property type="entry name" value="SRCR"/>
    <property type="match status" value="9"/>
</dbReference>
<dbReference type="Pfam" id="PF00084">
    <property type="entry name" value="Sushi"/>
    <property type="match status" value="1"/>
</dbReference>
<dbReference type="PRINTS" id="PR00258">
    <property type="entry name" value="SPERACTRCPTR"/>
</dbReference>
<dbReference type="SMART" id="SM00032">
    <property type="entry name" value="CCP"/>
    <property type="match status" value="1"/>
</dbReference>
<dbReference type="SMART" id="SM00202">
    <property type="entry name" value="SR"/>
    <property type="match status" value="9"/>
</dbReference>
<dbReference type="SUPFAM" id="SSF57535">
    <property type="entry name" value="Complement control module/SCR domain"/>
    <property type="match status" value="1"/>
</dbReference>
<dbReference type="SUPFAM" id="SSF56487">
    <property type="entry name" value="SRCR-like"/>
    <property type="match status" value="9"/>
</dbReference>
<dbReference type="PROSITE" id="PS00420">
    <property type="entry name" value="SRCR_1"/>
    <property type="match status" value="5"/>
</dbReference>
<dbReference type="PROSITE" id="PS50287">
    <property type="entry name" value="SRCR_2"/>
    <property type="match status" value="9"/>
</dbReference>
<dbReference type="PROSITE" id="PS50923">
    <property type="entry name" value="SUSHI"/>
    <property type="match status" value="1"/>
</dbReference>
<keyword id="KW-0968">Cytoplasmic vesicle</keyword>
<keyword id="KW-1015">Disulfide bond</keyword>
<keyword id="KW-0325">Glycoprotein</keyword>
<keyword id="KW-0391">Immunity</keyword>
<keyword id="KW-0399">Innate immunity</keyword>
<keyword id="KW-0472">Membrane</keyword>
<keyword id="KW-0581">Phagocytosis</keyword>
<keyword id="KW-0677">Repeat</keyword>
<keyword id="KW-0732">Signal</keyword>
<keyword id="KW-0768">Sushi</keyword>
<keyword id="KW-0812">Transmembrane</keyword>
<keyword id="KW-1133">Transmembrane helix</keyword>
<reference evidence="5 6" key="1">
    <citation type="journal article" date="2012" name="Dev. Comp. Immunol.">
        <title>Characterization of a scavenger receptor cysteine-rich-domain-containing protein of the starfish, Asterina pectinifera: ApSRCR1 acts as an opsonin in the larval and adult innate immune systems.</title>
        <authorList>
            <person name="Furukawa R."/>
            <person name="Matsumoto M."/>
            <person name="Kaneko H."/>
        </authorList>
    </citation>
    <scope>NUCLEOTIDE SEQUENCE [MRNA]</scope>
    <scope>FUNCTION</scope>
    <scope>SUBCELLULAR LOCATION</scope>
    <scope>TISSUE SPECIFICITY</scope>
    <scope>DEVELOPMENTAL STAGE</scope>
    <scope>INDUCTION</scope>
</reference>
<comment type="function">
    <text evidence="4">Involved in aggregate formation and phagocytosis by larval mesenchyme cells and adult coelomocytes. Binds to bacteria and may act as an opsonin in the innate immune system.</text>
</comment>
<comment type="subcellular location">
    <subcellularLocation>
        <location evidence="4">Cytoplasmic vesicle membrane</location>
        <topology evidence="4">Single-pass type I membrane protein</topology>
    </subcellularLocation>
</comment>
<comment type="tissue specificity">
    <text evidence="4">From the mid-gastrula stage, expressed only in mesenchyme cells that are migrating toward the body wall. At the brachiolaria stage, expressed in presumptive coelomocytes of the coelomic pouch. Also expressed in adult coelomocytes (at protein level).</text>
</comment>
<comment type="developmental stage">
    <text evidence="4">During larval development, expression is first detected in the mid-gastrula stage and increases thereafter (at protein level).</text>
</comment>
<comment type="induction">
    <text evidence="4">By bacterial challenge in adult coelomocytes.</text>
</comment>
<protein>
    <recommendedName>
        <fullName evidence="6">Scavenger receptor cysteine-rich domain superfamily protein</fullName>
        <shortName>ApSRCR1</shortName>
    </recommendedName>
</protein>
<name>SRCR1_PATPE</name>
<organism>
    <name type="scientific">Patiria pectinifera</name>
    <name type="common">Starfish</name>
    <name type="synonym">Asterina pectinifera</name>
    <dbReference type="NCBI Taxonomy" id="7594"/>
    <lineage>
        <taxon>Eukaryota</taxon>
        <taxon>Metazoa</taxon>
        <taxon>Echinodermata</taxon>
        <taxon>Eleutherozoa</taxon>
        <taxon>Asterozoa</taxon>
        <taxon>Asteroidea</taxon>
        <taxon>Valvatacea</taxon>
        <taxon>Valvatida</taxon>
        <taxon>Asterinidae</taxon>
        <taxon>Patiria</taxon>
    </lineage>
</organism>
<evidence type="ECO:0000255" key="1"/>
<evidence type="ECO:0000255" key="2">
    <source>
        <dbReference type="PROSITE-ProRule" id="PRU00196"/>
    </source>
</evidence>
<evidence type="ECO:0000255" key="3">
    <source>
        <dbReference type="PROSITE-ProRule" id="PRU00302"/>
    </source>
</evidence>
<evidence type="ECO:0000269" key="4">
    <source>
    </source>
</evidence>
<evidence type="ECO:0000305" key="5"/>
<evidence type="ECO:0000312" key="6">
    <source>
        <dbReference type="EMBL" id="BAK39578.1"/>
    </source>
</evidence>
<sequence length="1128" mass="119966">MTSLRRGNICWVAVCAALLTLTRGIDVIAKPSRTPSNGDVQLVGGASPAEGRVEVFYNGAWGTVCDDGWEMQDAQIVCKQLGFASANSTRCCASFGQGTGVIILDDLACTGDETRIGDCPHRGWEQHNCAHTEDAGVVCNGKVRLAGSPNPLQGRLEIFHEGEWGTVCDSDWDLKDASVVCRQLGYPSANSSSNVSFGPASTAQILLDRVSCMGDEHGVEYCEHGDWKNVSADCTHSRDAGVICTRPIRLVGGNGPMQGRVEILHNGEWGSVCDKGWSFQNAVVVCNQLGATQPRRPQGVPVGGGVGPTHMSFVNCDGTEATLEQCSNSGWGNAGECGHSNDAGVICTPAVRLVGGNTHIEGRVEVFNNGQWGSICPESWDAKDAEVACRQLGNYPLAEGDCCPQFPADVGVVLDNVVCTGNESRIQDCAHQDWGVVDCSGGQAAGAKCQATVQLVGGSHPLEGNVIVLRNGRWGSICDDNWDINDARVVCRQLGNYEAVAATCCAKYGQVPQEIILDDVACQGEEGRIEDCYHATWGSHNCGGSESAGVVCREIRLALDDSSSNLPKGRVEIVYNGVWGRICGTDWDLNDANVLCRQLYNSTAESVHSFKNGSGPILLSNFKCTGSESNIFDCTHNPWGDYTCDDADAAVVCRGGLRLAGGRTPLEGRVEVFHDGQWGTVCDDGWDLLDAKVVCTQLGNYEALSAKCCANFGQGTGPILIDGLACNGNEDLIEDCRHEGWGSHNCQHYEDAGVVCTDLRLTHENGSVSTNTLTGRVEVLSSSGEWGAICGKYWDKKDAEVVCQQLFNTSAMDTRKFYLSSPDQLINMGEVQCNGSESLLLQCPRASKPFTAQTCPGGETAGVLCKDIRLVSGNQREFGAVELLVDSQWGSICADNWGPNEGAVACKQLGYCAAKGTQKGLQPARTQGKMHFSSMNCTGSESRLRDCVHTYGGYTCNGLVFEAVVQCKAGCDWPGPIRHGSFSPNRSSYDPLTTIDVKCDAGYELMGSKTLQCVTGCDWSRPTPECQRISNCSIGGGGKPSVGAQAGPAGGVMLIIGIILGAVVMMLIACVALYLKGRNKNIGRGNPATTSAIWKPKKEFDELKEPVLSFSAMTAGGAGPEDGMGEDI</sequence>
<proteinExistence type="evidence at protein level"/>
<gene>
    <name evidence="6" type="primary">SRCR1</name>
</gene>
<accession>F7J220</accession>
<feature type="signal peptide" evidence="1">
    <location>
        <begin position="1"/>
        <end position="24"/>
    </location>
</feature>
<feature type="chain" id="PRO_0000415604" description="Scavenger receptor cysteine-rich domain superfamily protein" evidence="1">
    <location>
        <begin position="25"/>
        <end position="1128"/>
    </location>
</feature>
<feature type="topological domain" description="Extracellular" evidence="1">
    <location>
        <begin position="25"/>
        <end position="1051"/>
    </location>
</feature>
<feature type="transmembrane region" description="Helical" evidence="1">
    <location>
        <begin position="1052"/>
        <end position="1072"/>
    </location>
</feature>
<feature type="topological domain" description="Cytoplasmic" evidence="1">
    <location>
        <begin position="1073"/>
        <end position="1128"/>
    </location>
</feature>
<feature type="domain" description="SRCR 1" evidence="2">
    <location>
        <begin position="40"/>
        <end position="140"/>
    </location>
</feature>
<feature type="domain" description="SRCR 2" evidence="2">
    <location>
        <begin position="143"/>
        <end position="245"/>
    </location>
</feature>
<feature type="domain" description="SRCR 3" evidence="2">
    <location>
        <begin position="248"/>
        <end position="348"/>
    </location>
</feature>
<feature type="domain" description="SRCR 4" evidence="2">
    <location>
        <begin position="351"/>
        <end position="450"/>
    </location>
</feature>
<feature type="domain" description="SRCR 5" evidence="2">
    <location>
        <begin position="453"/>
        <end position="553"/>
    </location>
</feature>
<feature type="domain" description="SRCR 6" evidence="2">
    <location>
        <begin position="555"/>
        <end position="654"/>
    </location>
</feature>
<feature type="domain" description="SRCR 7" evidence="2">
    <location>
        <begin position="657"/>
        <end position="757"/>
    </location>
</feature>
<feature type="domain" description="SRCR 8" evidence="2">
    <location>
        <begin position="759"/>
        <end position="866"/>
    </location>
</feature>
<feature type="domain" description="SRCR 9" evidence="2">
    <location>
        <begin position="868"/>
        <end position="968"/>
    </location>
</feature>
<feature type="domain" description="Sushi" evidence="3">
    <location>
        <begin position="969"/>
        <end position="1028"/>
    </location>
</feature>
<feature type="glycosylation site" description="N-linked (GlcNAc...) asparagine" evidence="1">
    <location>
        <position position="87"/>
    </location>
</feature>
<feature type="glycosylation site" description="N-linked (GlcNAc...) asparagine" evidence="1">
    <location>
        <position position="190"/>
    </location>
</feature>
<feature type="glycosylation site" description="N-linked (GlcNAc...) asparagine" evidence="1">
    <location>
        <position position="194"/>
    </location>
</feature>
<feature type="glycosylation site" description="N-linked (GlcNAc...) asparagine" evidence="1">
    <location>
        <position position="229"/>
    </location>
</feature>
<feature type="glycosylation site" description="N-linked (GlcNAc...) asparagine" evidence="1">
    <location>
        <position position="422"/>
    </location>
</feature>
<feature type="glycosylation site" description="N-linked (GlcNAc...) asparagine" evidence="1">
    <location>
        <position position="601"/>
    </location>
</feature>
<feature type="glycosylation site" description="N-linked (GlcNAc...) asparagine" evidence="1">
    <location>
        <position position="612"/>
    </location>
</feature>
<feature type="glycosylation site" description="N-linked (GlcNAc...) asparagine" evidence="1">
    <location>
        <position position="765"/>
    </location>
</feature>
<feature type="glycosylation site" description="N-linked (GlcNAc...) asparagine" evidence="1">
    <location>
        <position position="808"/>
    </location>
</feature>
<feature type="glycosylation site" description="N-linked (GlcNAc...) asparagine" evidence="1">
    <location>
        <position position="834"/>
    </location>
</feature>
<feature type="glycosylation site" description="N-linked (GlcNAc...) asparagine" evidence="1">
    <location>
        <position position="936"/>
    </location>
</feature>
<feature type="glycosylation site" description="N-linked (GlcNAc...) asparagine" evidence="1">
    <location>
        <position position="985"/>
    </location>
</feature>
<feature type="glycosylation site" description="N-linked (GlcNAc...) asparagine" evidence="1">
    <location>
        <position position="1031"/>
    </location>
</feature>
<feature type="disulfide bond" evidence="1">
    <location>
        <begin position="65"/>
        <end position="129"/>
    </location>
</feature>
<feature type="disulfide bond" evidence="1">
    <location>
        <begin position="78"/>
        <end position="139"/>
    </location>
</feature>
<feature type="disulfide bond" evidence="1">
    <location>
        <begin position="109"/>
        <end position="119"/>
    </location>
</feature>
<feature type="disulfide bond" evidence="1">
    <location>
        <begin position="168"/>
        <end position="234"/>
    </location>
</feature>
<feature type="disulfide bond" evidence="1">
    <location>
        <begin position="181"/>
        <end position="244"/>
    </location>
</feature>
<feature type="disulfide bond" evidence="1">
    <location>
        <begin position="212"/>
        <end position="222"/>
    </location>
</feature>
<feature type="disulfide bond" evidence="1">
    <location>
        <begin position="273"/>
        <end position="337"/>
    </location>
</feature>
<feature type="disulfide bond" evidence="1">
    <location>
        <begin position="286"/>
        <end position="347"/>
    </location>
</feature>
<feature type="disulfide bond" evidence="1">
    <location>
        <begin position="316"/>
        <end position="326"/>
    </location>
</feature>
<feature type="disulfide bond" evidence="1">
    <location>
        <begin position="376"/>
        <end position="439"/>
    </location>
</feature>
<feature type="disulfide bond" evidence="1">
    <location>
        <begin position="389"/>
        <end position="449"/>
    </location>
</feature>
<feature type="disulfide bond" evidence="1">
    <location>
        <begin position="419"/>
        <end position="429"/>
    </location>
</feature>
<feature type="disulfide bond" evidence="1">
    <location>
        <begin position="478"/>
        <end position="542"/>
    </location>
</feature>
<feature type="disulfide bond" evidence="1">
    <location>
        <begin position="491"/>
        <end position="552"/>
    </location>
</feature>
<feature type="disulfide bond" evidence="1">
    <location>
        <begin position="522"/>
        <end position="532"/>
    </location>
</feature>
<feature type="disulfide bond" evidence="1">
    <location>
        <begin position="583"/>
        <end position="644"/>
    </location>
</feature>
<feature type="disulfide bond" evidence="1">
    <location>
        <begin position="596"/>
        <end position="653"/>
    </location>
</feature>
<feature type="disulfide bond" evidence="1">
    <location>
        <begin position="624"/>
        <end position="634"/>
    </location>
</feature>
<feature type="disulfide bond" evidence="1">
    <location>
        <begin position="682"/>
        <end position="746"/>
    </location>
</feature>
<feature type="disulfide bond" evidence="1">
    <location>
        <begin position="695"/>
        <end position="756"/>
    </location>
</feature>
<feature type="disulfide bond" evidence="1">
    <location>
        <begin position="726"/>
        <end position="736"/>
    </location>
</feature>
<feature type="disulfide bond" evidence="1">
    <location>
        <begin position="803"/>
        <end position="865"/>
    </location>
</feature>
<feature type="disulfide bond" evidence="1">
    <location>
        <begin position="833"/>
        <end position="843"/>
    </location>
</feature>
<feature type="disulfide bond" evidence="1">
    <location>
        <begin position="906"/>
        <end position="967"/>
    </location>
</feature>
<feature type="disulfide bond" evidence="1">
    <location>
        <begin position="937"/>
        <end position="947"/>
    </location>
</feature>
<feature type="disulfide bond" evidence="1">
    <location>
        <begin position="971"/>
        <end position="1013"/>
    </location>
</feature>
<feature type="disulfide bond" evidence="1">
    <location>
        <begin position="999"/>
        <end position="1026"/>
    </location>
</feature>